<keyword id="KW-0167">Capsid protein</keyword>
<keyword id="KW-0945">Host-virus interaction</keyword>
<keyword id="KW-1087">Inhibition of host complement factors by virus</keyword>
<keyword id="KW-1185">Reference proteome</keyword>
<keyword id="KW-1140">T=1 icosahedral capsid protein</keyword>
<keyword id="KW-0899">Viral immunoevasion</keyword>
<keyword id="KW-0946">Virion</keyword>
<gene>
    <name type="ORF">ORF2</name>
</gene>
<dbReference type="EMBL" id="Y15936">
    <property type="protein sequence ID" value="CAB95007.1"/>
    <property type="molecule type" value="Genomic_RNA"/>
</dbReference>
<dbReference type="SMR" id="Q9JH68"/>
<dbReference type="KEGG" id="vg:1449585"/>
<dbReference type="Proteomes" id="UP000000676">
    <property type="component" value="Segment"/>
</dbReference>
<dbReference type="GO" id="GO:0039615">
    <property type="term" value="C:T=1 icosahedral viral capsid"/>
    <property type="evidence" value="ECO:0007669"/>
    <property type="project" value="UniProtKB-KW"/>
</dbReference>
<dbReference type="GO" id="GO:0042784">
    <property type="term" value="P:symbiont-mediated suppression of host complement activation"/>
    <property type="evidence" value="ECO:0007669"/>
    <property type="project" value="UniProtKB-KW"/>
</dbReference>
<dbReference type="Gene3D" id="2.60.120.20">
    <property type="match status" value="1"/>
</dbReference>
<dbReference type="InterPro" id="IPR004337">
    <property type="entry name" value="Astro_capsid_N"/>
</dbReference>
<dbReference type="InterPro" id="IPR048802">
    <property type="entry name" value="SP2_M"/>
</dbReference>
<dbReference type="InterPro" id="IPR029053">
    <property type="entry name" value="Viral_coat"/>
</dbReference>
<dbReference type="Pfam" id="PF03115">
    <property type="entry name" value="Astro_capsid_N"/>
    <property type="match status" value="1"/>
</dbReference>
<dbReference type="Pfam" id="PF20751">
    <property type="entry name" value="SP2_M"/>
    <property type="match status" value="1"/>
</dbReference>
<evidence type="ECO:0000250" key="1">
    <source>
        <dbReference type="UniProtKB" id="Q9IFX1"/>
    </source>
</evidence>
<evidence type="ECO:0000250" key="2">
    <source>
        <dbReference type="UniProtKB" id="Q9Q3G5"/>
    </source>
</evidence>
<evidence type="ECO:0000256" key="3">
    <source>
        <dbReference type="SAM" id="MobiDB-lite"/>
    </source>
</evidence>
<evidence type="ECO:0000305" key="4"/>
<name>CAPSD_TASV1</name>
<comment type="function">
    <text evidence="1">Self-assembles to form an icosahedral T=3 immature capsid.</text>
</comment>
<comment type="subcellular location">
    <subcellularLocation>
        <location evidence="1">Virion</location>
    </subcellularLocation>
    <text evidence="1">Immature capsid.</text>
</comment>
<comment type="PTM">
    <text evidence="1">Specific enzymatic cleavages by the host yield mature proteins.</text>
</comment>
<comment type="similarity">
    <text evidence="4">Belongs to the astroviridae capsid polyprotein family.</text>
</comment>
<protein>
    <recommendedName>
        <fullName>Capsid polyprotein VP90</fullName>
    </recommendedName>
</protein>
<reference key="1">
    <citation type="journal article" date="2003" name="Virus Res.">
        <title>Complete genomic sequences of astroviruses from sheep and turkey: comparison with related viruses.</title>
        <authorList>
            <person name="Jonassen C.M."/>
            <person name="Jonassen T.O."/>
            <person name="Sveen T.M."/>
            <person name="Grinde B."/>
        </authorList>
    </citation>
    <scope>NUCLEOTIDE SEQUENCE [GENOMIC RNA]</scope>
</reference>
<organismHost>
    <name type="scientific">Meleagris gallopavo</name>
    <name type="common">Wild turkey</name>
    <dbReference type="NCBI Taxonomy" id="9103"/>
</organismHost>
<sequence length="671" mass="72514">MSAPAGKAGPKAQKKCKVVTQKTKTVPKKTKQQKPRKVRLQKVERQVKTLKAKTRGPKISDTFSTVVTVGRIIGNNDDSLTRQLKVFVNPLLMKNQDSGSTSSPLSIRASQYGLWKIAKLHVYFTPLAGSANVIGTVSFASLEQESGVATAESPDTIKAKYHAEVPIGSRFVWKVPPRMLTGPREGWWNMDSGDDPTNSVGPSISFWTYLKTILALSTATTTSYLGSLFLIEIRCTYLFSNYAPKPNLAIMVNEKITTTQPVTLTNLSDGSLVMTTTDTRLCALLDNDRGPRGPNAQTNGPGEKFWAVSTLVVDTVAASIGPWGWLLKGGWWVIRKIFGAANTTSTYAIYASVEDAAKDSRIYQPVSGTQTLAAGDVYVTQLTQPNVNEAGSTSLGFSPPTPPAPTGSYLPLPQAAGVPGIPPQYTFSDGQYTAATTWSGTQLYLTGVPATKTVSGSNEMFGVENNTMSRANIDRVQIYDFTTTGIIFLGGQNRSGGAIHTAKTLIVALKTATTKAPWLAADATGTNWAMPSWVGFPVPGAGDHFLQMQNSTDRTTHTTPVGVYFLVAYGATNKLVAFWAAPTDVQAEPTSLMTLYNVDAGRAPITAGLNFTTAMTEYSDDDDDAESDISSLFAPDEVDWKFKIEASSSRHLEEELQFWKSKATQLMLEKN</sequence>
<feature type="chain" id="PRO_0000320242" description="Capsid polyprotein VP90">
    <location>
        <begin position="1"/>
        <end position="671"/>
    </location>
</feature>
<feature type="region of interest" description="Disordered" evidence="3">
    <location>
        <begin position="1"/>
        <end position="39"/>
    </location>
</feature>
<feature type="region of interest" description="P2 globular domains" evidence="2">
    <location>
        <begin position="407"/>
        <end position="609"/>
    </location>
</feature>
<feature type="region of interest" description="Acidic" evidence="2">
    <location>
        <begin position="610"/>
        <end position="671"/>
    </location>
</feature>
<feature type="compositionally biased region" description="Low complexity" evidence="3">
    <location>
        <begin position="1"/>
        <end position="11"/>
    </location>
</feature>
<feature type="compositionally biased region" description="Basic residues" evidence="3">
    <location>
        <begin position="25"/>
        <end position="39"/>
    </location>
</feature>
<proteinExistence type="inferred from homology"/>
<organism>
    <name type="scientific">Turkey astrovirus 1</name>
    <name type="common">TAstV-1</name>
    <dbReference type="NCBI Taxonomy" id="364370"/>
    <lineage>
        <taxon>Viruses</taxon>
        <taxon>Riboviria</taxon>
        <taxon>Orthornavirae</taxon>
        <taxon>Pisuviricota</taxon>
        <taxon>Stelpaviricetes</taxon>
        <taxon>Stellavirales</taxon>
        <taxon>Astroviridae</taxon>
        <taxon>Avastrovirus</taxon>
        <taxon>Avastrovirus 1</taxon>
    </lineage>
</organism>
<accession>Q9JH68</accession>